<dbReference type="EC" id="1.14.18.9" evidence="5"/>
<dbReference type="EMBL" id="D50559">
    <property type="protein sequence ID" value="BAA23329.1"/>
    <property type="molecule type" value="mRNA"/>
</dbReference>
<dbReference type="EMBL" id="BC063155">
    <property type="protein sequence ID" value="AAH63155.1"/>
    <property type="molecule type" value="mRNA"/>
</dbReference>
<dbReference type="RefSeq" id="NP_543162.1">
    <property type="nucleotide sequence ID" value="NM_080886.1"/>
</dbReference>
<dbReference type="FunCoup" id="O35532">
    <property type="interactions" value="346"/>
</dbReference>
<dbReference type="IntAct" id="O35532">
    <property type="interactions" value="4"/>
</dbReference>
<dbReference type="STRING" id="10116.ENSRNOP00000043782"/>
<dbReference type="PhosphoSitePlus" id="O35532"/>
<dbReference type="PaxDb" id="10116-ENSRNOP00000043782"/>
<dbReference type="Ensembl" id="ENSRNOT00000044171.3">
    <property type="protein sequence ID" value="ENSRNOP00000043782.1"/>
    <property type="gene ID" value="ENSRNOG00000032297.3"/>
</dbReference>
<dbReference type="GeneID" id="140910"/>
<dbReference type="KEGG" id="rno:140910"/>
<dbReference type="UCSC" id="RGD:620281">
    <property type="organism name" value="rat"/>
</dbReference>
<dbReference type="AGR" id="RGD:620281"/>
<dbReference type="CTD" id="6307"/>
<dbReference type="RGD" id="620281">
    <property type="gene designation" value="Msmo1"/>
</dbReference>
<dbReference type="eggNOG" id="KOG0873">
    <property type="taxonomic scope" value="Eukaryota"/>
</dbReference>
<dbReference type="GeneTree" id="ENSGT00940000158012"/>
<dbReference type="HOGENOM" id="CLU_047036_5_2_1"/>
<dbReference type="InParanoid" id="O35532"/>
<dbReference type="OMA" id="IVHEFIY"/>
<dbReference type="OrthoDB" id="1658724at2759"/>
<dbReference type="PhylomeDB" id="O35532"/>
<dbReference type="TreeFam" id="TF354294"/>
<dbReference type="Reactome" id="R-RNO-191273">
    <property type="pathway name" value="Cholesterol biosynthesis"/>
</dbReference>
<dbReference type="SABIO-RK" id="O35532"/>
<dbReference type="UniPathway" id="UPA00063"/>
<dbReference type="UniPathway" id="UPA00770">
    <property type="reaction ID" value="UER00756"/>
</dbReference>
<dbReference type="PRO" id="PR:O35532"/>
<dbReference type="Proteomes" id="UP000002494">
    <property type="component" value="Chromosome 16"/>
</dbReference>
<dbReference type="Bgee" id="ENSRNOG00000032297">
    <property type="expression patterns" value="Expressed in ovary and 20 other cell types or tissues"/>
</dbReference>
<dbReference type="GO" id="GO:0005789">
    <property type="term" value="C:endoplasmic reticulum membrane"/>
    <property type="evidence" value="ECO:0000318"/>
    <property type="project" value="GO_Central"/>
</dbReference>
<dbReference type="GO" id="GO:0000254">
    <property type="term" value="F:C-4 methylsterol oxidase activity"/>
    <property type="evidence" value="ECO:0000318"/>
    <property type="project" value="GO_Central"/>
</dbReference>
<dbReference type="GO" id="GO:0005506">
    <property type="term" value="F:iron ion binding"/>
    <property type="evidence" value="ECO:0007669"/>
    <property type="project" value="InterPro"/>
</dbReference>
<dbReference type="GO" id="GO:0006695">
    <property type="term" value="P:cholesterol biosynthetic process"/>
    <property type="evidence" value="ECO:0007669"/>
    <property type="project" value="UniProtKB-UniPathway"/>
</dbReference>
<dbReference type="GO" id="GO:0016126">
    <property type="term" value="P:sterol biosynthetic process"/>
    <property type="evidence" value="ECO:0000318"/>
    <property type="project" value="GO_Central"/>
</dbReference>
<dbReference type="InterPro" id="IPR006694">
    <property type="entry name" value="Fatty_acid_hydroxylase"/>
</dbReference>
<dbReference type="InterPro" id="IPR050307">
    <property type="entry name" value="Sterol_Desaturase_Related"/>
</dbReference>
<dbReference type="PANTHER" id="PTHR11863">
    <property type="entry name" value="STEROL DESATURASE"/>
    <property type="match status" value="1"/>
</dbReference>
<dbReference type="Pfam" id="PF04116">
    <property type="entry name" value="FA_hydroxylase"/>
    <property type="match status" value="1"/>
</dbReference>
<protein>
    <recommendedName>
        <fullName>Methylsterol monooxygenase 1</fullName>
        <ecNumber evidence="5">1.14.18.9</ecNumber>
    </recommendedName>
    <alternativeName>
        <fullName>C-4 methylsterol oxidase</fullName>
    </alternativeName>
    <alternativeName>
        <fullName>Neuropep 1</fullName>
    </alternativeName>
    <alternativeName>
        <fullName>RANP-1</fullName>
    </alternativeName>
    <alternativeName>
        <fullName>Sterol-C4-methyl oxidase</fullName>
    </alternativeName>
</protein>
<keyword id="KW-0152">Cholesterol biosynthesis</keyword>
<keyword id="KW-0153">Cholesterol metabolism</keyword>
<keyword id="KW-0256">Endoplasmic reticulum</keyword>
<keyword id="KW-0408">Iron</keyword>
<keyword id="KW-0444">Lipid biosynthesis</keyword>
<keyword id="KW-0443">Lipid metabolism</keyword>
<keyword id="KW-0472">Membrane</keyword>
<keyword id="KW-0520">NAD</keyword>
<keyword id="KW-0560">Oxidoreductase</keyword>
<keyword id="KW-1185">Reference proteome</keyword>
<keyword id="KW-0752">Steroid biosynthesis</keyword>
<keyword id="KW-0753">Steroid metabolism</keyword>
<keyword id="KW-0756">Sterol biosynthesis</keyword>
<keyword id="KW-1207">Sterol metabolism</keyword>
<keyword id="KW-0812">Transmembrane</keyword>
<keyword id="KW-1133">Transmembrane helix</keyword>
<keyword id="KW-0832">Ubl conjugation</keyword>
<reference key="1">
    <citation type="journal article" date="1997" name="Neuroscience">
        <title>Identification and characterization of a novel gene (neurorep 1) expressed in nerve cells and up-regulated after axotomy.</title>
        <authorList>
            <person name="Uwabe K."/>
            <person name="Gahara Y."/>
            <person name="Yamada H."/>
            <person name="Miyake T."/>
            <person name="Kitamura T."/>
        </authorList>
    </citation>
    <scope>NUCLEOTIDE SEQUENCE [MRNA]</scope>
    <source>
        <strain>Sprague-Dawley</strain>
    </source>
</reference>
<reference key="2">
    <citation type="journal article" date="2004" name="Genome Res.">
        <title>The status, quality, and expansion of the NIH full-length cDNA project: the Mammalian Gene Collection (MGC).</title>
        <authorList>
            <consortium name="The MGC Project Team"/>
        </authorList>
    </citation>
    <scope>NUCLEOTIDE SEQUENCE [LARGE SCALE MRNA]</scope>
    <source>
        <tissue>Pituitary</tissue>
    </source>
</reference>
<reference key="3">
    <citation type="journal article" date="1970" name="J. Biol. Chem.">
        <title>Investigation of the component reactions of oxidative sterol demethylation. Oxidation of a 4,4-dimethyl sterol to a 4 beta-methyl-4 alpha-carboxylic acid during cholesterol biosynthesis.</title>
        <authorList>
            <person name="Miller W.L."/>
            <person name="Gaylor J.L."/>
        </authorList>
    </citation>
    <scope>FUNCTION</scope>
    <scope>CATALYTIC ACTIVITY</scope>
    <scope>PATHWAY</scope>
</reference>
<reference key="4">
    <citation type="journal article" date="1981" name="J. Biol. Chem.">
        <title>Total enzymic synthesis of cholesterol from lanosterol. Cytochrome b5-dependence of 4-methyl sterol oxidase.</title>
        <authorList>
            <person name="Fukushima H."/>
            <person name="Grinstead G.F."/>
            <person name="Gaylor J.L."/>
        </authorList>
    </citation>
    <scope>FUNCTION</scope>
    <scope>CATALYTIC ACTIVITY</scope>
    <scope>PATHWAY</scope>
</reference>
<sequence length="293" mass="34964">MAMNKSVGLFSSASLAVDYVDSLLPENPLQEPFKNAWVYMLDNYTKFQIATWGSLIVHETIYFLFSLPGFLFQFIPFMRKYKIQKDKPETFEGQWKCLKGILFNHFFIQLPLICGTYYFTEFFNIPYDWERMPRWYFTLARCLGCAVIEDTWHYFLHRLLHHKRIYKYIHKVHHEFQAPFGIEAEYAHPLETLILGTGFFIGIVLLCDHVILLWAWVTMRLLETIDVHSGYDIPLNPLNYIPFYTGARHHDFHHMNFIGNYASTFTWWDRIFGTDVQYHAYTEKMKKLGKKSE</sequence>
<feature type="chain" id="PRO_0000117036" description="Methylsterol monooxygenase 1">
    <location>
        <begin position="1"/>
        <end position="293"/>
    </location>
</feature>
<feature type="transmembrane region" description="Helical" evidence="2">
    <location>
        <begin position="55"/>
        <end position="75"/>
    </location>
</feature>
<feature type="transmembrane region" description="Helical" evidence="2">
    <location>
        <begin position="100"/>
        <end position="120"/>
    </location>
</feature>
<feature type="transmembrane region" description="Helical" evidence="2">
    <location>
        <begin position="199"/>
        <end position="219"/>
    </location>
</feature>
<feature type="domain" description="Fatty acid hydroxylase" evidence="2">
    <location>
        <begin position="144"/>
        <end position="274"/>
    </location>
</feature>
<feature type="short sequence motif" description="Histidine box-1">
    <location>
        <begin position="157"/>
        <end position="161"/>
    </location>
</feature>
<feature type="short sequence motif" description="Histidine box-2">
    <location>
        <begin position="170"/>
        <end position="174"/>
    </location>
</feature>
<feature type="short sequence motif" description="Histidine box-3">
    <location>
        <begin position="249"/>
        <end position="255"/>
    </location>
</feature>
<name>MSMO1_RAT</name>
<comment type="function">
    <text evidence="4 5">Catalyzes the three-step monooxygenation required for the demethylation of 4,4-dimethyl and 4alpha-methylsterols, which can be subsequently metabolized to cholesterol.</text>
</comment>
<comment type="catalytic activity">
    <reaction evidence="5">
        <text>4,4-dimethyl-5alpha-cholest-7-en-3beta-ol + 6 Fe(II)-[cytochrome b5] + 3 O2 + 5 H(+) = 4alpha-carboxy-4beta-methyl-5alpha-cholest-7-ene-3beta-ol + 6 Fe(III)-[cytochrome b5] + 4 H2O</text>
        <dbReference type="Rhea" id="RHEA:55220"/>
        <dbReference type="Rhea" id="RHEA-COMP:10438"/>
        <dbReference type="Rhea" id="RHEA-COMP:10439"/>
        <dbReference type="ChEBI" id="CHEBI:15377"/>
        <dbReference type="ChEBI" id="CHEBI:15378"/>
        <dbReference type="ChEBI" id="CHEBI:15379"/>
        <dbReference type="ChEBI" id="CHEBI:16455"/>
        <dbReference type="ChEBI" id="CHEBI:29033"/>
        <dbReference type="ChEBI" id="CHEBI:29034"/>
        <dbReference type="ChEBI" id="CHEBI:58387"/>
        <dbReference type="EC" id="1.14.18.9"/>
    </reaction>
    <physiologicalReaction direction="left-to-right" evidence="5">
        <dbReference type="Rhea" id="RHEA:55221"/>
    </physiologicalReaction>
</comment>
<comment type="catalytic activity">
    <reaction evidence="1">
        <text>4,4-dimethyl-5alpha-cholesta-8,24-dien-3beta-ol + 6 Fe(II)-[cytochrome b5] + 3 O2 + 5 H(+) = 4beta-methylzymosterol-4alpha-carboxylate + 6 Fe(III)-[cytochrome b5] + 4 H2O</text>
        <dbReference type="Rhea" id="RHEA:55244"/>
        <dbReference type="Rhea" id="RHEA-COMP:10438"/>
        <dbReference type="Rhea" id="RHEA-COMP:10439"/>
        <dbReference type="ChEBI" id="CHEBI:15377"/>
        <dbReference type="ChEBI" id="CHEBI:15378"/>
        <dbReference type="ChEBI" id="CHEBI:15379"/>
        <dbReference type="ChEBI" id="CHEBI:18364"/>
        <dbReference type="ChEBI" id="CHEBI:29033"/>
        <dbReference type="ChEBI" id="CHEBI:29034"/>
        <dbReference type="ChEBI" id="CHEBI:64925"/>
    </reaction>
    <physiologicalReaction direction="left-to-right" evidence="1">
        <dbReference type="Rhea" id="RHEA:55245"/>
    </physiologicalReaction>
</comment>
<comment type="catalytic activity">
    <reaction evidence="1">
        <text>4alpha-methylzymosterol + 6 Fe(II)-[cytochrome b5] + 3 O2 + 5 H(+) = 4alpha-carboxyzymosterol + 6 Fe(III)-[cytochrome b5] + 4 H2O</text>
        <dbReference type="Rhea" id="RHEA:47056"/>
        <dbReference type="Rhea" id="RHEA-COMP:10438"/>
        <dbReference type="Rhea" id="RHEA-COMP:10439"/>
        <dbReference type="ChEBI" id="CHEBI:1949"/>
        <dbReference type="ChEBI" id="CHEBI:15377"/>
        <dbReference type="ChEBI" id="CHEBI:15378"/>
        <dbReference type="ChEBI" id="CHEBI:15379"/>
        <dbReference type="ChEBI" id="CHEBI:29033"/>
        <dbReference type="ChEBI" id="CHEBI:29034"/>
        <dbReference type="ChEBI" id="CHEBI:143575"/>
    </reaction>
    <physiologicalReaction direction="left-to-right" evidence="1">
        <dbReference type="Rhea" id="RHEA:47057"/>
    </physiologicalReaction>
</comment>
<comment type="catalytic activity">
    <reaction evidence="5">
        <text>4alpha-methyl-5alpha-cholest-7-en-3beta-ol + 6 Fe(II)-[cytochrome b5] + 3 O2 + 5 H(+) = 4alpha-carboxy-5alpha-cholest-7-en-3beta-ol + 6 Fe(III)-[cytochrome b5] + 4 H2O</text>
        <dbReference type="Rhea" id="RHEA:62768"/>
        <dbReference type="Rhea" id="RHEA-COMP:10438"/>
        <dbReference type="Rhea" id="RHEA-COMP:10439"/>
        <dbReference type="ChEBI" id="CHEBI:15377"/>
        <dbReference type="ChEBI" id="CHEBI:15378"/>
        <dbReference type="ChEBI" id="CHEBI:15379"/>
        <dbReference type="ChEBI" id="CHEBI:18378"/>
        <dbReference type="ChEBI" id="CHEBI:29033"/>
        <dbReference type="ChEBI" id="CHEBI:29034"/>
        <dbReference type="ChEBI" id="CHEBI:145943"/>
    </reaction>
    <physiologicalReaction direction="left-to-right" evidence="5">
        <dbReference type="Rhea" id="RHEA:62769"/>
    </physiologicalReaction>
</comment>
<comment type="catalytic activity">
    <reaction evidence="1">
        <text>4,4-dimethyl-5alpha-cholest-8-en-3beta-ol + 6 Fe(II)-[cytochrome b5] + 3 O2 + 5 H(+) = 4alpha-carboxy-4beta-methyl-5alpha-cholest-8-en-3beta-ol + 6 Fe(III)-[cytochrome b5] + 4 H2O</text>
        <dbReference type="Rhea" id="RHEA:62776"/>
        <dbReference type="Rhea" id="RHEA-COMP:10438"/>
        <dbReference type="Rhea" id="RHEA-COMP:10439"/>
        <dbReference type="ChEBI" id="CHEBI:15377"/>
        <dbReference type="ChEBI" id="CHEBI:15378"/>
        <dbReference type="ChEBI" id="CHEBI:15379"/>
        <dbReference type="ChEBI" id="CHEBI:29033"/>
        <dbReference type="ChEBI" id="CHEBI:29034"/>
        <dbReference type="ChEBI" id="CHEBI:87044"/>
        <dbReference type="ChEBI" id="CHEBI:87047"/>
    </reaction>
    <physiologicalReaction direction="left-to-right" evidence="1">
        <dbReference type="Rhea" id="RHEA:62777"/>
    </physiologicalReaction>
</comment>
<comment type="catalytic activity">
    <reaction evidence="1">
        <text>4alpha-methyl-5alpha-cholest-8-en-3beta-ol + 6 Fe(II)-[cytochrome b5] + 3 O2 + 5 H(+) = 4alpha-carboxy-5alpha-cholest-8-ene-3beta-ol + 6 Fe(III)-[cytochrome b5] + 4 H2O</text>
        <dbReference type="Rhea" id="RHEA:62780"/>
        <dbReference type="Rhea" id="RHEA-COMP:10438"/>
        <dbReference type="Rhea" id="RHEA-COMP:10439"/>
        <dbReference type="ChEBI" id="CHEBI:15377"/>
        <dbReference type="ChEBI" id="CHEBI:15378"/>
        <dbReference type="ChEBI" id="CHEBI:15379"/>
        <dbReference type="ChEBI" id="CHEBI:29033"/>
        <dbReference type="ChEBI" id="CHEBI:29034"/>
        <dbReference type="ChEBI" id="CHEBI:87051"/>
        <dbReference type="ChEBI" id="CHEBI:87055"/>
    </reaction>
    <physiologicalReaction direction="left-to-right" evidence="1">
        <dbReference type="Rhea" id="RHEA:62781"/>
    </physiologicalReaction>
</comment>
<comment type="cofactor">
    <cofactor evidence="1">
        <name>Fe cation</name>
        <dbReference type="ChEBI" id="CHEBI:24875"/>
    </cofactor>
</comment>
<comment type="pathway">
    <text evidence="3">Steroid biosynthesis; zymosterol biosynthesis; zymosterol from lanosterol: step 3/6.</text>
</comment>
<comment type="pathway">
    <text evidence="4 5">Steroid biosynthesis; cholesterol biosynthesis.</text>
</comment>
<comment type="subcellular location">
    <subcellularLocation>
        <location evidence="3">Endoplasmic reticulum membrane</location>
        <topology evidence="3">Multi-pass membrane protein</topology>
    </subcellularLocation>
</comment>
<comment type="domain">
    <text>The histidine box domains may contain the active site and/or be involved in metal ion binding.</text>
</comment>
<comment type="PTM">
    <text evidence="1">Ubiquitinated by MARCHF6, leading to proteasomal degradation.</text>
</comment>
<comment type="similarity">
    <text evidence="3">Belongs to the sterol desaturase family.</text>
</comment>
<organism>
    <name type="scientific">Rattus norvegicus</name>
    <name type="common">Rat</name>
    <dbReference type="NCBI Taxonomy" id="10116"/>
    <lineage>
        <taxon>Eukaryota</taxon>
        <taxon>Metazoa</taxon>
        <taxon>Chordata</taxon>
        <taxon>Craniata</taxon>
        <taxon>Vertebrata</taxon>
        <taxon>Euteleostomi</taxon>
        <taxon>Mammalia</taxon>
        <taxon>Eutheria</taxon>
        <taxon>Euarchontoglires</taxon>
        <taxon>Glires</taxon>
        <taxon>Rodentia</taxon>
        <taxon>Myomorpha</taxon>
        <taxon>Muroidea</taxon>
        <taxon>Muridae</taxon>
        <taxon>Murinae</taxon>
        <taxon>Rattus</taxon>
    </lineage>
</organism>
<proteinExistence type="evidence at protein level"/>
<gene>
    <name type="primary">Msmo1</name>
    <name type="synonym">Sc4mol</name>
</gene>
<accession>O35532</accession>
<evidence type="ECO:0000250" key="1">
    <source>
        <dbReference type="UniProtKB" id="Q15800"/>
    </source>
</evidence>
<evidence type="ECO:0000255" key="2"/>
<evidence type="ECO:0000305" key="3"/>
<evidence type="ECO:0000305" key="4">
    <source>
    </source>
</evidence>
<evidence type="ECO:0000305" key="5">
    <source>
    </source>
</evidence>